<keyword id="KW-0903">Direct protein sequencing</keyword>
<keyword id="KW-1048">Host nucleus</keyword>
<keyword id="KW-0426">Late protein</keyword>
<keyword id="KW-0597">Phosphoprotein</keyword>
<keyword id="KW-1185">Reference proteome</keyword>
<keyword id="KW-0231">Viral genome packaging</keyword>
<keyword id="KW-1188">Viral release from host cell</keyword>
<organism>
    <name type="scientific">Human adenovirus C serotype 2</name>
    <name type="common">HAdV-2</name>
    <name type="synonym">Human adenovirus 2</name>
    <dbReference type="NCBI Taxonomy" id="10515"/>
    <lineage>
        <taxon>Viruses</taxon>
        <taxon>Varidnaviria</taxon>
        <taxon>Bamfordvirae</taxon>
        <taxon>Preplasmiviricota</taxon>
        <taxon>Tectiliviricetes</taxon>
        <taxon>Rowavirales</taxon>
        <taxon>Adenoviridae</taxon>
        <taxon>Mastadenovirus</taxon>
        <taxon>Human mastadenovirus C</taxon>
    </lineage>
</organism>
<comment type="function">
    <text evidence="1 4 5 6 10">Involved in viral genome packaging through its interaction with packaging proteins 1 and 2. After proteolytic cleavage by adenovirus protease, L1 52/55k protein is removed from the capsid during viral maturation.</text>
</comment>
<comment type="subunit">
    <text evidence="1 4 5 7 8">Part of the genome packaging complex composed of packaging proteins 1, 2 and 3; this complex specifically binds to the packaging sequence on the left end of viral genomic DNA and performs packaging of the viral genome (PubMed:22811519). Interacts with hexon-linking protein IIIa; this interaction is required to promote correct genome packaging (PubMed:21632753).</text>
</comment>
<comment type="subcellular location">
    <subcellularLocation>
        <location evidence="1 3">Host nucleus</location>
    </subcellularLocation>
    <text evidence="1 3">Nuclear protein present in empty capsids and assembly intermediates.</text>
</comment>
<comment type="induction">
    <text evidence="1">Expressed in the early phase and late phase of the viral replicative cycle.</text>
</comment>
<comment type="PTM">
    <text evidence="1 10">Cleaved at different sites by the viral protease during virion maturation.</text>
</comment>
<comment type="miscellaneous">
    <text evidence="1">All late proteins expressed from the major late promoter are produced by alternative splicing and alternative polyadenylation of the same gene giving rise to non-overlapping ORFs. A leader sequence is present in the N-terminus of all these mRNAs and is recognized by the viral shutoff protein to provide expression although conventional translation via ribosome scanning from the cap has been shut off in the host cell.</text>
</comment>
<comment type="similarity">
    <text evidence="1">Belongs to the adenoviridae packaging protein 3 family.</text>
</comment>
<gene>
    <name evidence="1" type="primary">L1</name>
</gene>
<accession>P03262</accession>
<feature type="chain" id="PRO_0000221865" description="Packaging protein 3">
    <location>
        <begin position="1"/>
        <end position="415"/>
    </location>
</feature>
<feature type="region of interest" description="Interaction with packaging protein 1" evidence="1">
    <location>
        <begin position="1"/>
        <end position="173"/>
    </location>
</feature>
<feature type="region of interest" description="Disordered" evidence="2">
    <location>
        <begin position="1"/>
        <end position="56"/>
    </location>
</feature>
<feature type="region of interest" description="Disordered" evidence="2">
    <location>
        <begin position="66"/>
        <end position="85"/>
    </location>
</feature>
<feature type="region of interest" description="Disordered" evidence="2">
    <location>
        <begin position="381"/>
        <end position="415"/>
    </location>
</feature>
<feature type="compositionally biased region" description="Low complexity" evidence="2">
    <location>
        <begin position="31"/>
        <end position="46"/>
    </location>
</feature>
<feature type="compositionally biased region" description="Basic and acidic residues" evidence="2">
    <location>
        <begin position="76"/>
        <end position="85"/>
    </location>
</feature>
<feature type="compositionally biased region" description="Low complexity" evidence="2">
    <location>
        <begin position="381"/>
        <end position="394"/>
    </location>
</feature>
<feature type="compositionally biased region" description="Acidic residues" evidence="2">
    <location>
        <begin position="400"/>
        <end position="415"/>
    </location>
</feature>
<feature type="site" description="Cleavage; by viral protease" evidence="1 10">
    <location>
        <begin position="351"/>
        <end position="352"/>
    </location>
</feature>
<feature type="modified residue" description="Phosphoserine; by host" evidence="1 9">
    <location>
        <position position="75"/>
    </location>
</feature>
<feature type="modified residue" description="Phosphoserine; by host" evidence="1 9">
    <location>
        <position position="360"/>
    </location>
</feature>
<reference key="1">
    <citation type="journal article" date="1984" name="J. Biol. Chem.">
        <title>DNA sequences from the adenovirus 2 genome.</title>
        <authorList>
            <person name="Roberts R.J."/>
            <person name="O'Neill K.E."/>
            <person name="Yen C.E."/>
        </authorList>
    </citation>
    <scope>NUCLEOTIDE SEQUENCE [GENOMIC DNA]</scope>
</reference>
<reference key="2">
    <citation type="journal article" date="2012" name="Virology">
        <title>The phosphoproteome of the adenovirus type 2 virion.</title>
        <authorList>
            <person name="Bergstrom Lind S."/>
            <person name="Artemenko K.A."/>
            <person name="Elfineh L."/>
            <person name="Zhao Y."/>
            <person name="Bergquist J."/>
            <person name="Pettersson U."/>
        </authorList>
    </citation>
    <scope>PROTEIN SEQUENCE OF 71-78 AND 357-369</scope>
    <scope>PHOSPHORYLATION AT SER-75 AND SER-360</scope>
</reference>
<reference key="3">
    <citation type="journal article" date="1992" name="J. Virol.">
        <title>Adenovirus L1 52- and 55-kilodalton proteins are present within assembling virions and colocalize with nuclear structures distinct from replication centers.</title>
        <authorList>
            <person name="Hasson T.B."/>
            <person name="Ornelles D.A."/>
            <person name="Shenk T."/>
        </authorList>
    </citation>
    <scope>SUBCELLULAR LOCATION</scope>
</reference>
<reference key="4">
    <citation type="journal article" date="2005" name="J. Virol.">
        <title>Analysis of the interaction of the adenovirus L1 52/55-kilodalton and IVa2 proteins with the packaging sequence in vivo and in vitro.</title>
        <authorList>
            <person name="Perez-Romero P."/>
            <person name="Tyler R.E."/>
            <person name="Abend J.R."/>
            <person name="Dus M."/>
            <person name="Imperiale M.J."/>
        </authorList>
    </citation>
    <scope>FUNCTION</scope>
    <scope>INTERACTION WITH PACKAGING PROTEIN 1</scope>
    <source>
        <strain>Human adenovirus C serotype 5</strain>
    </source>
</reference>
<reference key="5">
    <citation type="journal article" date="2006" name="J. Virol.">
        <title>Dependence of the encapsidation function of the adenovirus L1 52/55-kilodalton protein on its ability to bind the packaging sequence.</title>
        <authorList>
            <person name="Perez-Romero P."/>
            <person name="Gustin K.E."/>
            <person name="Imperiale M.J."/>
        </authorList>
    </citation>
    <scope>FUNCTION</scope>
    <scope>INTERACTION WITH PACKAGING PROTEIN 1</scope>
</reference>
<reference key="6">
    <citation type="journal article" date="2008" name="J. Virol.">
        <title>Role for the L1-52/55K protein in the serotype specificity of adenovirus DNA packaging.</title>
        <authorList>
            <person name="Wohl B.P."/>
            <person name="Hearing P."/>
        </authorList>
    </citation>
    <scope>FUNCTION</scope>
</reference>
<reference key="7">
    <citation type="journal article" date="2011" name="J. Virol.">
        <title>Adenovirus structural protein IIIa is involved in the serotype specificity of viral DNA packaging.</title>
        <authorList>
            <person name="Ma H.C."/>
            <person name="Hearing P."/>
        </authorList>
    </citation>
    <scope>INTERACTION WITH HEXON-LINKING PROTEIN IIIA</scope>
    <source>
        <strain>Human adenovirus C serotype 5</strain>
        <strain>Human adenovirus D serotype 17</strain>
    </source>
</reference>
<reference key="8">
    <citation type="journal article" date="2012" name="J. Virol.">
        <title>The adenovirus L4-22K Protein is multifunctional and is an integral component of crucial aspects of infection.</title>
        <authorList>
            <person name="Wu K."/>
            <person name="Orozco D."/>
            <person name="Hearing P."/>
        </authorList>
    </citation>
    <scope>IDENTIFICATION IN THE GENOME PACKAGING COMPLEX</scope>
    <source>
        <strain>Human adenovirus C serotype 5</strain>
    </source>
</reference>
<reference key="9">
    <citation type="journal article" date="2014" name="J. Virol.">
        <title>Processing of the l1 52/55k protein by the adenovirus protease: a new substrate and new insights into virion maturation.</title>
        <authorList>
            <person name="Perez-Berna A.J."/>
            <person name="Mangel W.F."/>
            <person name="McGrath W.J."/>
            <person name="Graziano V."/>
            <person name="Flint J."/>
            <person name="San Martin C."/>
        </authorList>
    </citation>
    <scope>FUNCTION</scope>
    <scope>PROTEOLYTIC CLEAVAGE BY VIRAL PROTEASE</scope>
</reference>
<protein>
    <recommendedName>
        <fullName evidence="1">Packaging protein 3</fullName>
    </recommendedName>
    <alternativeName>
        <fullName evidence="1">L1-52/55 kDa protein</fullName>
    </alternativeName>
    <alternativeName>
        <fullName evidence="1">Packaging protein 52K</fullName>
    </alternativeName>
</protein>
<sequence length="415" mass="46996">MHPVLRQMRPPPQQRQEQEQRQTCRAPSPSPTASGGATSAADAAADGDYEPPRRRARHYLDLEEGEGLARLGAPSPERHPRVQLKRDTREAYVPRQNLFRDREGEEPEEMRDRKFHAGRELRHGLNRERLLREEDFEPDARTGISPARAHVAAADLVTAYEQTVNQEINFQKSFNNHVRTLVAREEVAIGLMHLWDFVSALEQNPNSKPLMAQLFLIVQHSRDNEAFRDALLNIVEPEGRWLLDLINILQSIVVQERSLSLADKVAAINYSMLSLGKFYARKIYHTPYVPIDKEVKIEGFYMRMALKVLTLSDDLGVYRNERIHKAVSVSRRRELSDRELMHSLQRALAGTGSGDREAESYFDAGADLRWAPSRRALEAAGAGPGLAVAPARAGNVGGVEEYDEDDEYEPEDGEY</sequence>
<proteinExistence type="evidence at protein level"/>
<evidence type="ECO:0000255" key="1">
    <source>
        <dbReference type="HAMAP-Rule" id="MF_04058"/>
    </source>
</evidence>
<evidence type="ECO:0000256" key="2">
    <source>
        <dbReference type="SAM" id="MobiDB-lite"/>
    </source>
</evidence>
<evidence type="ECO:0000269" key="3">
    <source>
    </source>
</evidence>
<evidence type="ECO:0000269" key="4">
    <source>
    </source>
</evidence>
<evidence type="ECO:0000269" key="5">
    <source>
    </source>
</evidence>
<evidence type="ECO:0000269" key="6">
    <source>
    </source>
</evidence>
<evidence type="ECO:0000269" key="7">
    <source>
    </source>
</evidence>
<evidence type="ECO:0000269" key="8">
    <source>
    </source>
</evidence>
<evidence type="ECO:0000269" key="9">
    <source>
    </source>
</evidence>
<evidence type="ECO:0000269" key="10">
    <source>
    </source>
</evidence>
<dbReference type="EMBL" id="J01917">
    <property type="protein sequence ID" value="AAA92209.1"/>
    <property type="molecule type" value="Genomic_DNA"/>
</dbReference>
<dbReference type="PIR" id="A03830">
    <property type="entry name" value="WMAD52"/>
</dbReference>
<dbReference type="RefSeq" id="AP_000168.1">
    <property type="nucleotide sequence ID" value="AC_000007.1"/>
</dbReference>
<dbReference type="RefSeq" id="NP_040519.1">
    <property type="nucleotide sequence ID" value="NC_001405.1"/>
</dbReference>
<dbReference type="iPTMnet" id="P03262"/>
<dbReference type="GeneID" id="2652993"/>
<dbReference type="Proteomes" id="UP000008167">
    <property type="component" value="Segment"/>
</dbReference>
<dbReference type="GO" id="GO:0042025">
    <property type="term" value="C:host cell nucleus"/>
    <property type="evidence" value="ECO:0000314"/>
    <property type="project" value="UniProtKB"/>
</dbReference>
<dbReference type="GO" id="GO:0019073">
    <property type="term" value="P:viral DNA genome packaging"/>
    <property type="evidence" value="ECO:0000315"/>
    <property type="project" value="UniProtKB"/>
</dbReference>
<dbReference type="GO" id="GO:0019076">
    <property type="term" value="P:viral release from host cell"/>
    <property type="evidence" value="ECO:0007669"/>
    <property type="project" value="UniProtKB-UniRule"/>
</dbReference>
<dbReference type="HAMAP" id="MF_04058">
    <property type="entry name" value="ADV_PKG3"/>
    <property type="match status" value="1"/>
</dbReference>
<dbReference type="InterPro" id="IPR037536">
    <property type="entry name" value="ADV_PKG3"/>
</dbReference>
<dbReference type="InterPro" id="IPR004292">
    <property type="entry name" value="L1-like"/>
</dbReference>
<dbReference type="Pfam" id="PF03052">
    <property type="entry name" value="Adeno_52K"/>
    <property type="match status" value="1"/>
</dbReference>
<name>PKG3_ADE02</name>
<organismHost>
    <name type="scientific">Homo sapiens</name>
    <name type="common">Human</name>
    <dbReference type="NCBI Taxonomy" id="9606"/>
</organismHost>